<comment type="function">
    <text evidence="1">Presumably involved in the processing and regular turnover of intracellular proteins. Catalyzes the removal of unsubstituted N-terminal amino acids from various peptides.</text>
</comment>
<comment type="catalytic activity">
    <reaction evidence="1">
        <text>Release of an N-terminal amino acid, Xaa-|-Yaa-, in which Xaa is preferably Leu, but may be other amino acids including Pro although not Arg or Lys, and Yaa may be Pro. Amino acid amides and methyl esters are also readily hydrolyzed, but rates on arylamides are exceedingly low.</text>
        <dbReference type="EC" id="3.4.11.1"/>
    </reaction>
</comment>
<comment type="catalytic activity">
    <reaction evidence="1">
        <text>Release of an N-terminal amino acid, preferentially leucine, but not glutamic or aspartic acids.</text>
        <dbReference type="EC" id="3.4.11.10"/>
    </reaction>
</comment>
<comment type="cofactor">
    <cofactor evidence="1">
        <name>Mn(2+)</name>
        <dbReference type="ChEBI" id="CHEBI:29035"/>
    </cofactor>
    <text evidence="1">Binds 2 manganese ions per subunit.</text>
</comment>
<comment type="subcellular location">
    <subcellularLocation>
        <location evidence="1">Cytoplasm</location>
    </subcellularLocation>
</comment>
<comment type="similarity">
    <text evidence="1">Belongs to the peptidase M17 family.</text>
</comment>
<accession>Q8KD74</accession>
<organism>
    <name type="scientific">Chlorobaculum tepidum (strain ATCC 49652 / DSM 12025 / NBRC 103806 / TLS)</name>
    <name type="common">Chlorobium tepidum</name>
    <dbReference type="NCBI Taxonomy" id="194439"/>
    <lineage>
        <taxon>Bacteria</taxon>
        <taxon>Pseudomonadati</taxon>
        <taxon>Chlorobiota</taxon>
        <taxon>Chlorobiia</taxon>
        <taxon>Chlorobiales</taxon>
        <taxon>Chlorobiaceae</taxon>
        <taxon>Chlorobaculum</taxon>
    </lineage>
</organism>
<keyword id="KW-0031">Aminopeptidase</keyword>
<keyword id="KW-0963">Cytoplasm</keyword>
<keyword id="KW-0378">Hydrolase</keyword>
<keyword id="KW-0464">Manganese</keyword>
<keyword id="KW-0479">Metal-binding</keyword>
<keyword id="KW-0645">Protease</keyword>
<keyword id="KW-1185">Reference proteome</keyword>
<dbReference type="EC" id="3.4.11.1" evidence="1"/>
<dbReference type="EC" id="3.4.11.10" evidence="1"/>
<dbReference type="EMBL" id="AE006470">
    <property type="protein sequence ID" value="AAM72413.1"/>
    <property type="molecule type" value="Genomic_DNA"/>
</dbReference>
<dbReference type="RefSeq" id="NP_662071.1">
    <property type="nucleotide sequence ID" value="NC_002932.3"/>
</dbReference>
<dbReference type="RefSeq" id="WP_010932852.1">
    <property type="nucleotide sequence ID" value="NC_002932.3"/>
</dbReference>
<dbReference type="SMR" id="Q8KD74"/>
<dbReference type="STRING" id="194439.CT1180"/>
<dbReference type="EnsemblBacteria" id="AAM72413">
    <property type="protein sequence ID" value="AAM72413"/>
    <property type="gene ID" value="CT1180"/>
</dbReference>
<dbReference type="KEGG" id="cte:CT1180"/>
<dbReference type="PATRIC" id="fig|194439.7.peg.1075"/>
<dbReference type="eggNOG" id="COG0260">
    <property type="taxonomic scope" value="Bacteria"/>
</dbReference>
<dbReference type="HOGENOM" id="CLU_013734_2_2_10"/>
<dbReference type="OrthoDB" id="9809354at2"/>
<dbReference type="Proteomes" id="UP000001007">
    <property type="component" value="Chromosome"/>
</dbReference>
<dbReference type="GO" id="GO:0005737">
    <property type="term" value="C:cytoplasm"/>
    <property type="evidence" value="ECO:0007669"/>
    <property type="project" value="UniProtKB-SubCell"/>
</dbReference>
<dbReference type="GO" id="GO:0030145">
    <property type="term" value="F:manganese ion binding"/>
    <property type="evidence" value="ECO:0007669"/>
    <property type="project" value="UniProtKB-UniRule"/>
</dbReference>
<dbReference type="GO" id="GO:0070006">
    <property type="term" value="F:metalloaminopeptidase activity"/>
    <property type="evidence" value="ECO:0007669"/>
    <property type="project" value="InterPro"/>
</dbReference>
<dbReference type="GO" id="GO:0006508">
    <property type="term" value="P:proteolysis"/>
    <property type="evidence" value="ECO:0007669"/>
    <property type="project" value="UniProtKB-KW"/>
</dbReference>
<dbReference type="CDD" id="cd00433">
    <property type="entry name" value="Peptidase_M17"/>
    <property type="match status" value="1"/>
</dbReference>
<dbReference type="Gene3D" id="3.40.220.10">
    <property type="entry name" value="Leucine Aminopeptidase, subunit E, domain 1"/>
    <property type="match status" value="1"/>
</dbReference>
<dbReference type="Gene3D" id="3.40.630.10">
    <property type="entry name" value="Zn peptidases"/>
    <property type="match status" value="1"/>
</dbReference>
<dbReference type="HAMAP" id="MF_00181">
    <property type="entry name" value="Cytosol_peptidase_M17"/>
    <property type="match status" value="1"/>
</dbReference>
<dbReference type="InterPro" id="IPR011356">
    <property type="entry name" value="Leucine_aapep/pepB"/>
</dbReference>
<dbReference type="InterPro" id="IPR043472">
    <property type="entry name" value="Macro_dom-like"/>
</dbReference>
<dbReference type="InterPro" id="IPR000819">
    <property type="entry name" value="Peptidase_M17_C"/>
</dbReference>
<dbReference type="InterPro" id="IPR023042">
    <property type="entry name" value="Peptidase_M17_leu_NH2_pept"/>
</dbReference>
<dbReference type="InterPro" id="IPR008283">
    <property type="entry name" value="Peptidase_M17_N"/>
</dbReference>
<dbReference type="NCBIfam" id="NF002073">
    <property type="entry name" value="PRK00913.1-2"/>
    <property type="match status" value="1"/>
</dbReference>
<dbReference type="NCBIfam" id="NF002074">
    <property type="entry name" value="PRK00913.1-4"/>
    <property type="match status" value="1"/>
</dbReference>
<dbReference type="NCBIfam" id="NF002082">
    <property type="entry name" value="PRK00913.3-4"/>
    <property type="match status" value="1"/>
</dbReference>
<dbReference type="PANTHER" id="PTHR11963:SF23">
    <property type="entry name" value="CYTOSOL AMINOPEPTIDASE"/>
    <property type="match status" value="1"/>
</dbReference>
<dbReference type="PANTHER" id="PTHR11963">
    <property type="entry name" value="LEUCINE AMINOPEPTIDASE-RELATED"/>
    <property type="match status" value="1"/>
</dbReference>
<dbReference type="Pfam" id="PF00883">
    <property type="entry name" value="Peptidase_M17"/>
    <property type="match status" value="1"/>
</dbReference>
<dbReference type="Pfam" id="PF02789">
    <property type="entry name" value="Peptidase_M17_N"/>
    <property type="match status" value="1"/>
</dbReference>
<dbReference type="PRINTS" id="PR00481">
    <property type="entry name" value="LAMNOPPTDASE"/>
</dbReference>
<dbReference type="SUPFAM" id="SSF52949">
    <property type="entry name" value="Macro domain-like"/>
    <property type="match status" value="1"/>
</dbReference>
<dbReference type="SUPFAM" id="SSF53187">
    <property type="entry name" value="Zn-dependent exopeptidases"/>
    <property type="match status" value="1"/>
</dbReference>
<dbReference type="PROSITE" id="PS00631">
    <property type="entry name" value="CYTOSOL_AP"/>
    <property type="match status" value="1"/>
</dbReference>
<gene>
    <name evidence="1" type="primary">pepA</name>
    <name type="ordered locus">CT1180</name>
</gene>
<proteinExistence type="inferred from homology"/>
<name>AMPA_CHLTE</name>
<reference key="1">
    <citation type="journal article" date="2002" name="Proc. Natl. Acad. Sci. U.S.A.">
        <title>The complete genome sequence of Chlorobium tepidum TLS, a photosynthetic, anaerobic, green-sulfur bacterium.</title>
        <authorList>
            <person name="Eisen J.A."/>
            <person name="Nelson K.E."/>
            <person name="Paulsen I.T."/>
            <person name="Heidelberg J.F."/>
            <person name="Wu M."/>
            <person name="Dodson R.J."/>
            <person name="DeBoy R.T."/>
            <person name="Gwinn M.L."/>
            <person name="Nelson W.C."/>
            <person name="Haft D.H."/>
            <person name="Hickey E.K."/>
            <person name="Peterson J.D."/>
            <person name="Durkin A.S."/>
            <person name="Kolonay J.F."/>
            <person name="Yang F."/>
            <person name="Holt I.E."/>
            <person name="Umayam L.A."/>
            <person name="Mason T.M."/>
            <person name="Brenner M."/>
            <person name="Shea T.P."/>
            <person name="Parksey D.S."/>
            <person name="Nierman W.C."/>
            <person name="Feldblyum T.V."/>
            <person name="Hansen C.L."/>
            <person name="Craven M.B."/>
            <person name="Radune D."/>
            <person name="Vamathevan J.J."/>
            <person name="Khouri H.M."/>
            <person name="White O."/>
            <person name="Gruber T.M."/>
            <person name="Ketchum K.A."/>
            <person name="Venter J.C."/>
            <person name="Tettelin H."/>
            <person name="Bryant D.A."/>
            <person name="Fraser C.M."/>
        </authorList>
    </citation>
    <scope>NUCLEOTIDE SEQUENCE [LARGE SCALE GENOMIC DNA]</scope>
    <source>
        <strain>ATCC 49652 / DSM 12025 / NBRC 103806 / TLS</strain>
    </source>
</reference>
<evidence type="ECO:0000255" key="1">
    <source>
        <dbReference type="HAMAP-Rule" id="MF_00181"/>
    </source>
</evidence>
<sequence>MKCTVTAKESGLVNADILVQFFSKKEMKRDAGKVLAGLGVVASPDGDFKASAGEIAMLYRQASGKEASRVILAGVGEGKTAEDYRKAADSVARKTVDLHLGVLALDCSPIDDWAKQSKQKPEELAAILVEGVLSGAYRFDRLKSGKLDKEETKEDKPKNIEELVLAGCGSRLEAIEKGAGKGMIIGACQNRARDLVNLPGNHLSAEDLAEAAIEAGKRGGFEVTVFDKKKIVELGMGGLLAVNKGSEQPPTFVILDYKPKGKAKKTIALVGKGVTFDSGGISLKPAQGMDEMKSDMSGAAVVIAAIEAAASLGLPLRVVGLVPATDNMPGGSAQKPGDVITTMSGITVEVGNTDAEGRLILADALFYAKKEYNPDVIIDLATLTGACIVALGNSVAGLFSNDEKLAESIFEAGQSSGEKVWRLPLWDEYDELIKSDVADVHNTGGRGAGTITAAKFLEKFIDGHKHWAHIDIAGPAFWAKGGSKTPGATGFGVRLLLDLLKGWS</sequence>
<feature type="chain" id="PRO_0000165740" description="Probable cytosol aminopeptidase">
    <location>
        <begin position="1"/>
        <end position="504"/>
    </location>
</feature>
<feature type="active site" evidence="1">
    <location>
        <position position="284"/>
    </location>
</feature>
<feature type="active site" evidence="1">
    <location>
        <position position="358"/>
    </location>
</feature>
<feature type="binding site" evidence="1">
    <location>
        <position position="272"/>
    </location>
    <ligand>
        <name>Mn(2+)</name>
        <dbReference type="ChEBI" id="CHEBI:29035"/>
        <label>2</label>
    </ligand>
</feature>
<feature type="binding site" evidence="1">
    <location>
        <position position="277"/>
    </location>
    <ligand>
        <name>Mn(2+)</name>
        <dbReference type="ChEBI" id="CHEBI:29035"/>
        <label>1</label>
    </ligand>
</feature>
<feature type="binding site" evidence="1">
    <location>
        <position position="277"/>
    </location>
    <ligand>
        <name>Mn(2+)</name>
        <dbReference type="ChEBI" id="CHEBI:29035"/>
        <label>2</label>
    </ligand>
</feature>
<feature type="binding site" evidence="1">
    <location>
        <position position="295"/>
    </location>
    <ligand>
        <name>Mn(2+)</name>
        <dbReference type="ChEBI" id="CHEBI:29035"/>
        <label>2</label>
    </ligand>
</feature>
<feature type="binding site" evidence="1">
    <location>
        <position position="354"/>
    </location>
    <ligand>
        <name>Mn(2+)</name>
        <dbReference type="ChEBI" id="CHEBI:29035"/>
        <label>1</label>
    </ligand>
</feature>
<feature type="binding site" evidence="1">
    <location>
        <position position="356"/>
    </location>
    <ligand>
        <name>Mn(2+)</name>
        <dbReference type="ChEBI" id="CHEBI:29035"/>
        <label>1</label>
    </ligand>
</feature>
<feature type="binding site" evidence="1">
    <location>
        <position position="356"/>
    </location>
    <ligand>
        <name>Mn(2+)</name>
        <dbReference type="ChEBI" id="CHEBI:29035"/>
        <label>2</label>
    </ligand>
</feature>
<protein>
    <recommendedName>
        <fullName evidence="1">Probable cytosol aminopeptidase</fullName>
        <ecNumber evidence="1">3.4.11.1</ecNumber>
    </recommendedName>
    <alternativeName>
        <fullName evidence="1">Leucine aminopeptidase</fullName>
        <shortName evidence="1">LAP</shortName>
        <ecNumber evidence="1">3.4.11.10</ecNumber>
    </alternativeName>
    <alternativeName>
        <fullName evidence="1">Leucyl aminopeptidase</fullName>
    </alternativeName>
</protein>